<proteinExistence type="inferred from homology"/>
<keyword id="KW-0687">Ribonucleoprotein</keyword>
<keyword id="KW-0689">Ribosomal protein</keyword>
<keyword id="KW-0694">RNA-binding</keyword>
<keyword id="KW-0699">rRNA-binding</keyword>
<organism>
    <name type="scientific">Brucella melitensis biotype 2 (strain ATCC 23457)</name>
    <dbReference type="NCBI Taxonomy" id="546272"/>
    <lineage>
        <taxon>Bacteria</taxon>
        <taxon>Pseudomonadati</taxon>
        <taxon>Pseudomonadota</taxon>
        <taxon>Alphaproteobacteria</taxon>
        <taxon>Hyphomicrobiales</taxon>
        <taxon>Brucellaceae</taxon>
        <taxon>Brucella/Ochrobactrum group</taxon>
        <taxon>Brucella</taxon>
    </lineage>
</organism>
<feature type="chain" id="PRO_1000165991" description="Large ribosomal subunit protein uL4">
    <location>
        <begin position="1"/>
        <end position="206"/>
    </location>
</feature>
<feature type="region of interest" description="Disordered" evidence="2">
    <location>
        <begin position="42"/>
        <end position="94"/>
    </location>
</feature>
<feature type="compositionally biased region" description="Basic residues" evidence="2">
    <location>
        <begin position="64"/>
        <end position="77"/>
    </location>
</feature>
<sequence>MDLTITTLEGKDAGKVKLNEEIFGLDPRDDILQRVVRWQLARRQQGSHKAQGRGDVSRTGSKMYKQKGTGRARHHSARAPQFRGGGQAHGPVVRNHDHDLPKKVRALGLRHALSAKAKASDLIIIDDLASADAKTKQLVSQFAKLGLENALLIGGAEIDANFQRAASNIPNIDVLPVQGINVYDILRRGKLVLSKAAVEALEERFK</sequence>
<accession>C0RJK0</accession>
<protein>
    <recommendedName>
        <fullName evidence="1">Large ribosomal subunit protein uL4</fullName>
    </recommendedName>
    <alternativeName>
        <fullName evidence="3">50S ribosomal protein L4</fullName>
    </alternativeName>
</protein>
<dbReference type="EMBL" id="CP001488">
    <property type="protein sequence ID" value="ACO01008.1"/>
    <property type="molecule type" value="Genomic_DNA"/>
</dbReference>
<dbReference type="RefSeq" id="WP_002964361.1">
    <property type="nucleotide sequence ID" value="NC_012441.1"/>
</dbReference>
<dbReference type="SMR" id="C0RJK0"/>
<dbReference type="GeneID" id="93016440"/>
<dbReference type="KEGG" id="bmi:BMEA_A1277"/>
<dbReference type="HOGENOM" id="CLU_041575_5_1_5"/>
<dbReference type="Proteomes" id="UP000001748">
    <property type="component" value="Chromosome I"/>
</dbReference>
<dbReference type="GO" id="GO:1990904">
    <property type="term" value="C:ribonucleoprotein complex"/>
    <property type="evidence" value="ECO:0007669"/>
    <property type="project" value="UniProtKB-KW"/>
</dbReference>
<dbReference type="GO" id="GO:0005840">
    <property type="term" value="C:ribosome"/>
    <property type="evidence" value="ECO:0007669"/>
    <property type="project" value="UniProtKB-KW"/>
</dbReference>
<dbReference type="GO" id="GO:0019843">
    <property type="term" value="F:rRNA binding"/>
    <property type="evidence" value="ECO:0007669"/>
    <property type="project" value="UniProtKB-UniRule"/>
</dbReference>
<dbReference type="GO" id="GO:0003735">
    <property type="term" value="F:structural constituent of ribosome"/>
    <property type="evidence" value="ECO:0007669"/>
    <property type="project" value="InterPro"/>
</dbReference>
<dbReference type="GO" id="GO:0006412">
    <property type="term" value="P:translation"/>
    <property type="evidence" value="ECO:0007669"/>
    <property type="project" value="UniProtKB-UniRule"/>
</dbReference>
<dbReference type="Gene3D" id="3.40.1370.10">
    <property type="match status" value="1"/>
</dbReference>
<dbReference type="HAMAP" id="MF_01328_B">
    <property type="entry name" value="Ribosomal_uL4_B"/>
    <property type="match status" value="1"/>
</dbReference>
<dbReference type="InterPro" id="IPR002136">
    <property type="entry name" value="Ribosomal_uL4"/>
</dbReference>
<dbReference type="InterPro" id="IPR013005">
    <property type="entry name" value="Ribosomal_uL4-like"/>
</dbReference>
<dbReference type="InterPro" id="IPR023574">
    <property type="entry name" value="Ribosomal_uL4_dom_sf"/>
</dbReference>
<dbReference type="NCBIfam" id="TIGR03953">
    <property type="entry name" value="rplD_bact"/>
    <property type="match status" value="1"/>
</dbReference>
<dbReference type="PANTHER" id="PTHR10746">
    <property type="entry name" value="50S RIBOSOMAL PROTEIN L4"/>
    <property type="match status" value="1"/>
</dbReference>
<dbReference type="PANTHER" id="PTHR10746:SF6">
    <property type="entry name" value="LARGE RIBOSOMAL SUBUNIT PROTEIN UL4M"/>
    <property type="match status" value="1"/>
</dbReference>
<dbReference type="Pfam" id="PF00573">
    <property type="entry name" value="Ribosomal_L4"/>
    <property type="match status" value="1"/>
</dbReference>
<dbReference type="SUPFAM" id="SSF52166">
    <property type="entry name" value="Ribosomal protein L4"/>
    <property type="match status" value="1"/>
</dbReference>
<comment type="function">
    <text evidence="1">One of the primary rRNA binding proteins, this protein initially binds near the 5'-end of the 23S rRNA. It is important during the early stages of 50S assembly. It makes multiple contacts with different domains of the 23S rRNA in the assembled 50S subunit and ribosome.</text>
</comment>
<comment type="function">
    <text evidence="1">Forms part of the polypeptide exit tunnel.</text>
</comment>
<comment type="subunit">
    <text evidence="1">Part of the 50S ribosomal subunit.</text>
</comment>
<comment type="similarity">
    <text evidence="1">Belongs to the universal ribosomal protein uL4 family.</text>
</comment>
<gene>
    <name evidence="1" type="primary">rplD</name>
    <name type="ordered locus">BMEA_A1277</name>
</gene>
<name>RL4_BRUMB</name>
<evidence type="ECO:0000255" key="1">
    <source>
        <dbReference type="HAMAP-Rule" id="MF_01328"/>
    </source>
</evidence>
<evidence type="ECO:0000256" key="2">
    <source>
        <dbReference type="SAM" id="MobiDB-lite"/>
    </source>
</evidence>
<evidence type="ECO:0000305" key="3"/>
<reference key="1">
    <citation type="submission" date="2009-03" db="EMBL/GenBank/DDBJ databases">
        <title>Brucella melitensis ATCC 23457 whole genome shotgun sequencing project.</title>
        <authorList>
            <person name="Setubal J.C."/>
            <person name="Boyle S."/>
            <person name="Crasta O.R."/>
            <person name="Gillespie J.J."/>
            <person name="Kenyon R.W."/>
            <person name="Lu J."/>
            <person name="Mane S."/>
            <person name="Nagrani S."/>
            <person name="Shallom J.M."/>
            <person name="Shallom S."/>
            <person name="Shukla M."/>
            <person name="Snyder E.E."/>
            <person name="Sobral B.W."/>
            <person name="Wattam A.R."/>
            <person name="Will R."/>
            <person name="Williams K."/>
            <person name="Yoo H."/>
            <person name="Munk C."/>
            <person name="Tapia R."/>
            <person name="Han C."/>
            <person name="Detter J.C."/>
            <person name="Bruce D."/>
            <person name="Brettin T.S."/>
        </authorList>
    </citation>
    <scope>NUCLEOTIDE SEQUENCE [LARGE SCALE GENOMIC DNA]</scope>
    <source>
        <strain>ATCC 23457</strain>
    </source>
</reference>